<comment type="function">
    <text evidence="1">Component of the cytochrome b6-f complex, which mediates electron transfer between photosystem II (PSII) and photosystem I (PSI), cyclic electron flow around PSI, and state transitions. PetG is required for either the stability or assembly of the cytochrome b6-f complex.</text>
</comment>
<comment type="subunit">
    <text evidence="1">The 4 large subunits of the cytochrome b6-f complex are cytochrome b6, subunit IV (17 kDa polypeptide, PetD), cytochrome f and the Rieske protein, while the 4 small subunits are PetG, PetL, PetM and PetN. The complex functions as a dimer.</text>
</comment>
<comment type="subcellular location">
    <subcellularLocation>
        <location evidence="1">Plastid</location>
        <location evidence="1">Chloroplast thylakoid membrane</location>
        <topology evidence="1">Single-pass membrane protein</topology>
    </subcellularLocation>
</comment>
<comment type="similarity">
    <text evidence="1">Belongs to the PetG family.</text>
</comment>
<feature type="chain" id="PRO_0000216406" description="Cytochrome b6-f complex subunit 5">
    <location>
        <begin position="1"/>
        <end position="37"/>
    </location>
</feature>
<feature type="transmembrane region" description="Helical" evidence="1">
    <location>
        <begin position="5"/>
        <end position="25"/>
    </location>
</feature>
<organism>
    <name type="scientific">Nicotiana tabacum</name>
    <name type="common">Common tobacco</name>
    <dbReference type="NCBI Taxonomy" id="4097"/>
    <lineage>
        <taxon>Eukaryota</taxon>
        <taxon>Viridiplantae</taxon>
        <taxon>Streptophyta</taxon>
        <taxon>Embryophyta</taxon>
        <taxon>Tracheophyta</taxon>
        <taxon>Spermatophyta</taxon>
        <taxon>Magnoliopsida</taxon>
        <taxon>eudicotyledons</taxon>
        <taxon>Gunneridae</taxon>
        <taxon>Pentapetalae</taxon>
        <taxon>asterids</taxon>
        <taxon>lamiids</taxon>
        <taxon>Solanales</taxon>
        <taxon>Solanaceae</taxon>
        <taxon>Nicotianoideae</taxon>
        <taxon>Nicotianeae</taxon>
        <taxon>Nicotiana</taxon>
    </lineage>
</organism>
<accession>P69462</accession>
<accession>P12121</accession>
<accession>P32973</accession>
<dbReference type="EMBL" id="Z00044">
    <property type="protein sequence ID" value="CAA77420.1"/>
    <property type="molecule type" value="Genomic_DNA"/>
</dbReference>
<dbReference type="RefSeq" id="NP_054520.1">
    <property type="nucleotide sequence ID" value="NC_001879.2"/>
</dbReference>
<dbReference type="SMR" id="P69462"/>
<dbReference type="GeneID" id="800450"/>
<dbReference type="KEGG" id="nta:800450"/>
<dbReference type="OrthoDB" id="35473at2759"/>
<dbReference type="Proteomes" id="UP000084051">
    <property type="component" value="Unplaced"/>
</dbReference>
<dbReference type="GO" id="GO:0009535">
    <property type="term" value="C:chloroplast thylakoid membrane"/>
    <property type="evidence" value="ECO:0007669"/>
    <property type="project" value="UniProtKB-SubCell"/>
</dbReference>
<dbReference type="GO" id="GO:0009512">
    <property type="term" value="C:cytochrome b6f complex"/>
    <property type="evidence" value="ECO:0007669"/>
    <property type="project" value="InterPro"/>
</dbReference>
<dbReference type="GO" id="GO:0045158">
    <property type="term" value="F:electron transporter, transferring electrons within cytochrome b6/f complex of photosystem II activity"/>
    <property type="evidence" value="ECO:0007669"/>
    <property type="project" value="UniProtKB-UniRule"/>
</dbReference>
<dbReference type="GO" id="GO:0017004">
    <property type="term" value="P:cytochrome complex assembly"/>
    <property type="evidence" value="ECO:0007669"/>
    <property type="project" value="UniProtKB-UniRule"/>
</dbReference>
<dbReference type="GO" id="GO:0015979">
    <property type="term" value="P:photosynthesis"/>
    <property type="evidence" value="ECO:0007669"/>
    <property type="project" value="UniProtKB-KW"/>
</dbReference>
<dbReference type="HAMAP" id="MF_00432">
    <property type="entry name" value="Cytb6_f_PetG"/>
    <property type="match status" value="1"/>
</dbReference>
<dbReference type="InterPro" id="IPR003683">
    <property type="entry name" value="Cyt_6/f_cplx_su5"/>
</dbReference>
<dbReference type="InterPro" id="IPR036099">
    <property type="entry name" value="Cyt_6/f_cplx_su5_sf"/>
</dbReference>
<dbReference type="NCBIfam" id="NF001907">
    <property type="entry name" value="PRK00665.1"/>
    <property type="match status" value="1"/>
</dbReference>
<dbReference type="Pfam" id="PF02529">
    <property type="entry name" value="PetG"/>
    <property type="match status" value="1"/>
</dbReference>
<dbReference type="PIRSF" id="PIRSF000034">
    <property type="entry name" value="Cyt_b6-f_V"/>
    <property type="match status" value="1"/>
</dbReference>
<dbReference type="SUPFAM" id="SSF103446">
    <property type="entry name" value="PetG subunit of the cytochrome b6f complex"/>
    <property type="match status" value="1"/>
</dbReference>
<proteinExistence type="inferred from homology"/>
<keyword id="KW-0150">Chloroplast</keyword>
<keyword id="KW-0249">Electron transport</keyword>
<keyword id="KW-0472">Membrane</keyword>
<keyword id="KW-0602">Photosynthesis</keyword>
<keyword id="KW-0934">Plastid</keyword>
<keyword id="KW-1185">Reference proteome</keyword>
<keyword id="KW-0793">Thylakoid</keyword>
<keyword id="KW-0812">Transmembrane</keyword>
<keyword id="KW-1133">Transmembrane helix</keyword>
<keyword id="KW-0813">Transport</keyword>
<gene>
    <name evidence="1" type="primary">petG</name>
</gene>
<reference key="1">
    <citation type="journal article" date="1986" name="EMBO J.">
        <title>The complete nucleotide sequence of the tobacco chloroplast genome: its gene organization and expression.</title>
        <authorList>
            <person name="Shinozaki K."/>
            <person name="Ohme M."/>
            <person name="Tanaka M."/>
            <person name="Wakasugi T."/>
            <person name="Hayashida N."/>
            <person name="Matsubayashi T."/>
            <person name="Zaita N."/>
            <person name="Chunwongse J."/>
            <person name="Obokata J."/>
            <person name="Yamaguchi-Shinozaki K."/>
            <person name="Ohto C."/>
            <person name="Torazawa K."/>
            <person name="Meng B.-Y."/>
            <person name="Sugita M."/>
            <person name="Deno H."/>
            <person name="Kamogashira T."/>
            <person name="Yamada K."/>
            <person name="Kusuda J."/>
            <person name="Takaiwa F."/>
            <person name="Kato A."/>
            <person name="Tohdoh N."/>
            <person name="Shimada H."/>
            <person name="Sugiura M."/>
        </authorList>
    </citation>
    <scope>NUCLEOTIDE SEQUENCE [LARGE SCALE GENOMIC DNA]</scope>
    <source>
        <strain>cv. Bright Yellow 4</strain>
    </source>
</reference>
<protein>
    <recommendedName>
        <fullName evidence="1">Cytochrome b6-f complex subunit 5</fullName>
    </recommendedName>
    <alternativeName>
        <fullName evidence="1">Cytochrome b6-f complex subunit PetG</fullName>
    </alternativeName>
    <alternativeName>
        <fullName evidence="1">Cytochrome b6-f complex subunit V</fullName>
    </alternativeName>
</protein>
<sequence>MIEVFLFGIVLGLIPITLAGLFVTAYLQYRRGDQLDL</sequence>
<name>PETG_TOBAC</name>
<evidence type="ECO:0000255" key="1">
    <source>
        <dbReference type="HAMAP-Rule" id="MF_00432"/>
    </source>
</evidence>
<geneLocation type="chloroplast"/>